<proteinExistence type="evidence at protein level"/>
<organism>
    <name type="scientific">Bacillus subtilis (strain 168)</name>
    <dbReference type="NCBI Taxonomy" id="224308"/>
    <lineage>
        <taxon>Bacteria</taxon>
        <taxon>Bacillati</taxon>
        <taxon>Bacillota</taxon>
        <taxon>Bacilli</taxon>
        <taxon>Bacillales</taxon>
        <taxon>Bacillaceae</taxon>
        <taxon>Bacillus</taxon>
    </lineage>
</organism>
<accession>P39822</accession>
<sequence>MFNTAVKILYRSLIELTNHRLSSYLIKGFCESKISKPVIPLFSKHFRLNWDDVDGTAADYGSLSELFIRQINLERRPVSKEAHAVVSPVDGVVQTVGIINPNQTFTVKGKDYSFAELTGCKSADHQYNGGYFVVLYLSPRHYHRFHSPISCRYQKLAELGNRSYPVNQLGLKYGKDVLSKNYRFVYELNSGSRNVLMIPVGAMNINSIVQTNTRTELEIGEELGYFSFGSTVILVFEKDAFQPSAHLAEGQEVQVGELIGYEE</sequence>
<feature type="chain" id="PRO_0000029631" description="Phosphatidylserine decarboxylase beta chain" evidence="1">
    <location>
        <begin position="1"/>
        <end position="229"/>
    </location>
</feature>
<feature type="chain" id="PRO_0000029632" description="Phosphatidylserine decarboxylase alpha chain" evidence="1">
    <location>
        <begin position="230"/>
        <end position="263"/>
    </location>
</feature>
<feature type="active site" description="Charge relay system; for autoendoproteolytic cleavage activity" evidence="1">
    <location>
        <position position="90"/>
    </location>
</feature>
<feature type="active site" description="Charge relay system; for autoendoproteolytic cleavage activity" evidence="1">
    <location>
        <position position="146"/>
    </location>
</feature>
<feature type="active site" description="Charge relay system; for autoendoproteolytic cleavage activity" evidence="1">
    <location>
        <position position="230"/>
    </location>
</feature>
<feature type="active site" description="Schiff-base intermediate with substrate; via pyruvic acid; for decarboxylase activity" evidence="1">
    <location>
        <position position="230"/>
    </location>
</feature>
<feature type="site" description="Cleavage (non-hydrolytic); by autocatalysis" evidence="1">
    <location>
        <begin position="229"/>
        <end position="230"/>
    </location>
</feature>
<feature type="modified residue" description="Pyruvic acid (Ser); by autocatalysis" evidence="1">
    <location>
        <position position="230"/>
    </location>
</feature>
<name>PSD_BACSU</name>
<evidence type="ECO:0000255" key="1">
    <source>
        <dbReference type="HAMAP-Rule" id="MF_00662"/>
    </source>
</evidence>
<evidence type="ECO:0000269" key="2">
    <source>
    </source>
</evidence>
<evidence type="ECO:0000269" key="3">
    <source>
    </source>
</evidence>
<evidence type="ECO:0000303" key="4">
    <source>
    </source>
</evidence>
<protein>
    <recommendedName>
        <fullName evidence="1">Phosphatidylserine decarboxylase proenzyme</fullName>
        <ecNumber evidence="1 3">4.1.1.65</ecNumber>
    </recommendedName>
    <component>
        <recommendedName>
            <fullName evidence="1">Phosphatidylserine decarboxylase alpha chain</fullName>
        </recommendedName>
    </component>
    <component>
        <recommendedName>
            <fullName evidence="1">Phosphatidylserine decarboxylase beta chain</fullName>
        </recommendedName>
    </component>
</protein>
<reference key="1">
    <citation type="journal article" date="1998" name="J. Bacteriol.">
        <title>Cloning, sequencing, and disruption of the Bacillus subtilis psd gene coding for phosphatidylserine decarboxylase.</title>
        <authorList>
            <person name="Matsumoto K."/>
            <person name="Okada M."/>
            <person name="Horikoshi Y."/>
            <person name="Matsuzaki H."/>
            <person name="Kishi T."/>
            <person name="Itaya M."/>
            <person name="Shibuya I."/>
        </authorList>
    </citation>
    <scope>NUCLEOTIDE SEQUENCE [GENOMIC DNA]</scope>
    <scope>FUNCTION</scope>
    <scope>CATALYTIC ACTIVITY</scope>
    <scope>PATHWAY</scope>
    <scope>DISRUPTION PHENOTYPE</scope>
    <source>
        <strain>168 / Marburg / ATCC 6051 / DSM 10 / JCM 1465 / NBRC 13719 / NCIMB 3610 / NRRL NRS-744 / VKM B-501</strain>
    </source>
</reference>
<reference key="2">
    <citation type="submission" date="1997-07" db="EMBL/GenBank/DDBJ databases">
        <title>Sequence analysis of the 70kb region between 17 and 23 degree of the Bacillus subtilis chromosome.</title>
        <authorList>
            <person name="Haga K."/>
            <person name="Liu H."/>
            <person name="Yasumoto K."/>
            <person name="Takahashi H."/>
            <person name="Yoshikawa H."/>
        </authorList>
    </citation>
    <scope>NUCLEOTIDE SEQUENCE [GENOMIC DNA]</scope>
    <source>
        <strain>168</strain>
    </source>
</reference>
<reference key="3">
    <citation type="journal article" date="1997" name="Nature">
        <title>The complete genome sequence of the Gram-positive bacterium Bacillus subtilis.</title>
        <authorList>
            <person name="Kunst F."/>
            <person name="Ogasawara N."/>
            <person name="Moszer I."/>
            <person name="Albertini A.M."/>
            <person name="Alloni G."/>
            <person name="Azevedo V."/>
            <person name="Bertero M.G."/>
            <person name="Bessieres P."/>
            <person name="Bolotin A."/>
            <person name="Borchert S."/>
            <person name="Borriss R."/>
            <person name="Boursier L."/>
            <person name="Brans A."/>
            <person name="Braun M."/>
            <person name="Brignell S.C."/>
            <person name="Bron S."/>
            <person name="Brouillet S."/>
            <person name="Bruschi C.V."/>
            <person name="Caldwell B."/>
            <person name="Capuano V."/>
            <person name="Carter N.M."/>
            <person name="Choi S.-K."/>
            <person name="Codani J.-J."/>
            <person name="Connerton I.F."/>
            <person name="Cummings N.J."/>
            <person name="Daniel R.A."/>
            <person name="Denizot F."/>
            <person name="Devine K.M."/>
            <person name="Duesterhoeft A."/>
            <person name="Ehrlich S.D."/>
            <person name="Emmerson P.T."/>
            <person name="Entian K.-D."/>
            <person name="Errington J."/>
            <person name="Fabret C."/>
            <person name="Ferrari E."/>
            <person name="Foulger D."/>
            <person name="Fritz C."/>
            <person name="Fujita M."/>
            <person name="Fujita Y."/>
            <person name="Fuma S."/>
            <person name="Galizzi A."/>
            <person name="Galleron N."/>
            <person name="Ghim S.-Y."/>
            <person name="Glaser P."/>
            <person name="Goffeau A."/>
            <person name="Golightly E.J."/>
            <person name="Grandi G."/>
            <person name="Guiseppi G."/>
            <person name="Guy B.J."/>
            <person name="Haga K."/>
            <person name="Haiech J."/>
            <person name="Harwood C.R."/>
            <person name="Henaut A."/>
            <person name="Hilbert H."/>
            <person name="Holsappel S."/>
            <person name="Hosono S."/>
            <person name="Hullo M.-F."/>
            <person name="Itaya M."/>
            <person name="Jones L.-M."/>
            <person name="Joris B."/>
            <person name="Karamata D."/>
            <person name="Kasahara Y."/>
            <person name="Klaerr-Blanchard M."/>
            <person name="Klein C."/>
            <person name="Kobayashi Y."/>
            <person name="Koetter P."/>
            <person name="Koningstein G."/>
            <person name="Krogh S."/>
            <person name="Kumano M."/>
            <person name="Kurita K."/>
            <person name="Lapidus A."/>
            <person name="Lardinois S."/>
            <person name="Lauber J."/>
            <person name="Lazarevic V."/>
            <person name="Lee S.-M."/>
            <person name="Levine A."/>
            <person name="Liu H."/>
            <person name="Masuda S."/>
            <person name="Mauel C."/>
            <person name="Medigue C."/>
            <person name="Medina N."/>
            <person name="Mellado R.P."/>
            <person name="Mizuno M."/>
            <person name="Moestl D."/>
            <person name="Nakai S."/>
            <person name="Noback M."/>
            <person name="Noone D."/>
            <person name="O'Reilly M."/>
            <person name="Ogawa K."/>
            <person name="Ogiwara A."/>
            <person name="Oudega B."/>
            <person name="Park S.-H."/>
            <person name="Parro V."/>
            <person name="Pohl T.M."/>
            <person name="Portetelle D."/>
            <person name="Porwollik S."/>
            <person name="Prescott A.M."/>
            <person name="Presecan E."/>
            <person name="Pujic P."/>
            <person name="Purnelle B."/>
            <person name="Rapoport G."/>
            <person name="Rey M."/>
            <person name="Reynolds S."/>
            <person name="Rieger M."/>
            <person name="Rivolta C."/>
            <person name="Rocha E."/>
            <person name="Roche B."/>
            <person name="Rose M."/>
            <person name="Sadaie Y."/>
            <person name="Sato T."/>
            <person name="Scanlan E."/>
            <person name="Schleich S."/>
            <person name="Schroeter R."/>
            <person name="Scoffone F."/>
            <person name="Sekiguchi J."/>
            <person name="Sekowska A."/>
            <person name="Seror S.J."/>
            <person name="Serror P."/>
            <person name="Shin B.-S."/>
            <person name="Soldo B."/>
            <person name="Sorokin A."/>
            <person name="Tacconi E."/>
            <person name="Takagi T."/>
            <person name="Takahashi H."/>
            <person name="Takemaru K."/>
            <person name="Takeuchi M."/>
            <person name="Tamakoshi A."/>
            <person name="Tanaka T."/>
            <person name="Terpstra P."/>
            <person name="Tognoni A."/>
            <person name="Tosato V."/>
            <person name="Uchiyama S."/>
            <person name="Vandenbol M."/>
            <person name="Vannier F."/>
            <person name="Vassarotti A."/>
            <person name="Viari A."/>
            <person name="Wambutt R."/>
            <person name="Wedler E."/>
            <person name="Wedler H."/>
            <person name="Weitzenegger T."/>
            <person name="Winters P."/>
            <person name="Wipat A."/>
            <person name="Yamamoto H."/>
            <person name="Yamane K."/>
            <person name="Yasumoto K."/>
            <person name="Yata K."/>
            <person name="Yoshida K."/>
            <person name="Yoshikawa H.-F."/>
            <person name="Zumstein E."/>
            <person name="Yoshikawa H."/>
            <person name="Danchin A."/>
        </authorList>
    </citation>
    <scope>NUCLEOTIDE SEQUENCE [LARGE SCALE GENOMIC DNA]</scope>
    <source>
        <strain>168</strain>
    </source>
</reference>
<reference key="4">
    <citation type="journal article" date="2005" name="J. Bacteriol.">
        <title>Phosphatidylethanolamine domains and localization of phospholipid synthases in Bacillus subtilis membranes.</title>
        <authorList>
            <person name="Nishibori A."/>
            <person name="Kusaka J."/>
            <person name="Hara H."/>
            <person name="Umeda M."/>
            <person name="Matsumoto K."/>
        </authorList>
    </citation>
    <scope>SUBCELLULAR LOCATION</scope>
</reference>
<dbReference type="EC" id="4.1.1.65" evidence="1 3"/>
<dbReference type="EMBL" id="D38022">
    <property type="protein sequence ID" value="BAA07226.1"/>
    <property type="molecule type" value="Genomic_DNA"/>
</dbReference>
<dbReference type="EMBL" id="AB006424">
    <property type="protein sequence ID" value="BAA33126.1"/>
    <property type="molecule type" value="Genomic_DNA"/>
</dbReference>
<dbReference type="EMBL" id="AL009126">
    <property type="protein sequence ID" value="CAB12023.1"/>
    <property type="molecule type" value="Genomic_DNA"/>
</dbReference>
<dbReference type="PIR" id="B69683">
    <property type="entry name" value="B69683"/>
</dbReference>
<dbReference type="RefSeq" id="NP_388111.1">
    <property type="nucleotide sequence ID" value="NC_000964.3"/>
</dbReference>
<dbReference type="RefSeq" id="WP_003246344.1">
    <property type="nucleotide sequence ID" value="NZ_OZ025638.1"/>
</dbReference>
<dbReference type="SMR" id="P39822"/>
<dbReference type="FunCoup" id="P39822">
    <property type="interactions" value="461"/>
</dbReference>
<dbReference type="STRING" id="224308.BSU02290"/>
<dbReference type="PaxDb" id="224308-BSU02290"/>
<dbReference type="EnsemblBacteria" id="CAB12023">
    <property type="protein sequence ID" value="CAB12023"/>
    <property type="gene ID" value="BSU_02290"/>
</dbReference>
<dbReference type="GeneID" id="938431"/>
<dbReference type="KEGG" id="bsu:BSU02290"/>
<dbReference type="PATRIC" id="fig|224308.179.peg.235"/>
<dbReference type="eggNOG" id="COG0688">
    <property type="taxonomic scope" value="Bacteria"/>
</dbReference>
<dbReference type="InParanoid" id="P39822"/>
<dbReference type="OrthoDB" id="9802030at2"/>
<dbReference type="PhylomeDB" id="P39822"/>
<dbReference type="BioCyc" id="BSUB:BSU02290-MONOMER"/>
<dbReference type="UniPathway" id="UPA00558">
    <property type="reaction ID" value="UER00616"/>
</dbReference>
<dbReference type="Proteomes" id="UP000001570">
    <property type="component" value="Chromosome"/>
</dbReference>
<dbReference type="GO" id="GO:0005886">
    <property type="term" value="C:plasma membrane"/>
    <property type="evidence" value="ECO:0007669"/>
    <property type="project" value="UniProtKB-SubCell"/>
</dbReference>
<dbReference type="GO" id="GO:0004609">
    <property type="term" value="F:phosphatidylserine decarboxylase activity"/>
    <property type="evidence" value="ECO:0000318"/>
    <property type="project" value="GO_Central"/>
</dbReference>
<dbReference type="GO" id="GO:0006646">
    <property type="term" value="P:phosphatidylethanolamine biosynthetic process"/>
    <property type="evidence" value="ECO:0000318"/>
    <property type="project" value="GO_Central"/>
</dbReference>
<dbReference type="HAMAP" id="MF_00662">
    <property type="entry name" value="PS_decarb_PSD_B_type1"/>
    <property type="match status" value="1"/>
</dbReference>
<dbReference type="InterPro" id="IPR003817">
    <property type="entry name" value="PS_Dcarbxylase"/>
</dbReference>
<dbReference type="InterPro" id="IPR033177">
    <property type="entry name" value="PSD-B"/>
</dbReference>
<dbReference type="InterPro" id="IPR033178">
    <property type="entry name" value="PSD_type1_pro"/>
</dbReference>
<dbReference type="NCBIfam" id="NF002853">
    <property type="entry name" value="PRK03140.1"/>
    <property type="match status" value="1"/>
</dbReference>
<dbReference type="NCBIfam" id="TIGR00163">
    <property type="entry name" value="PS_decarb"/>
    <property type="match status" value="1"/>
</dbReference>
<dbReference type="PANTHER" id="PTHR10067">
    <property type="entry name" value="PHOSPHATIDYLSERINE DECARBOXYLASE"/>
    <property type="match status" value="1"/>
</dbReference>
<dbReference type="PANTHER" id="PTHR10067:SF6">
    <property type="entry name" value="PHOSPHATIDYLSERINE DECARBOXYLASE PROENZYME, MITOCHONDRIAL"/>
    <property type="match status" value="1"/>
</dbReference>
<dbReference type="Pfam" id="PF02666">
    <property type="entry name" value="PS_Dcarbxylase"/>
    <property type="match status" value="1"/>
</dbReference>
<comment type="function">
    <text evidence="1 3">Catalyzes the formation of phosphatidylethanolamine (PtdEtn) from phosphatidylserine (PtdSer).</text>
</comment>
<comment type="catalytic activity">
    <reaction evidence="1 3">
        <text>a 1,2-diacyl-sn-glycero-3-phospho-L-serine + H(+) = a 1,2-diacyl-sn-glycero-3-phosphoethanolamine + CO2</text>
        <dbReference type="Rhea" id="RHEA:20828"/>
        <dbReference type="ChEBI" id="CHEBI:15378"/>
        <dbReference type="ChEBI" id="CHEBI:16526"/>
        <dbReference type="ChEBI" id="CHEBI:57262"/>
        <dbReference type="ChEBI" id="CHEBI:64612"/>
        <dbReference type="EC" id="4.1.1.65"/>
    </reaction>
</comment>
<comment type="cofactor">
    <cofactor evidence="1">
        <name>pyruvate</name>
        <dbReference type="ChEBI" id="CHEBI:15361"/>
    </cofactor>
    <text evidence="1">Binds 1 pyruvoyl group covalently per subunit.</text>
</comment>
<comment type="pathway">
    <text evidence="1 3">Phospholipid metabolism; phosphatidylethanolamine biosynthesis; phosphatidylethanolamine from CDP-diacylglycerol: step 2/2.</text>
</comment>
<comment type="subunit">
    <text evidence="1">Heterodimer of a large membrane-associated beta subunit and a small pyruvoyl-containing alpha subunit.</text>
</comment>
<comment type="subcellular location">
    <subcellularLocation>
        <location evidence="1 2">Cell membrane</location>
        <topology evidence="1">Peripheral membrane protein</topology>
    </subcellularLocation>
    <text evidence="2">Localized in the septal membrane.</text>
</comment>
<comment type="PTM">
    <text evidence="1">Is synthesized initially as an inactive proenzyme. Formation of the active enzyme involves a self-maturation process in which the active site pyruvoyl group is generated from an internal serine residue via an autocatalytic post-translational modification. Two non-identical subunits are generated from the proenzyme in this reaction, and the pyruvate is formed at the N-terminus of the alpha chain, which is derived from the carboxyl end of the proenzyme. The autoendoproteolytic cleavage occurs by a canonical serine protease mechanism, in which the side chain hydroxyl group of the serine supplies its oxygen atom to form the C-terminus of the beta chain, while the remainder of the serine residue undergoes an oxidative deamination to produce ammonia and the pyruvoyl prosthetic group on the alpha chain. During this reaction, the Ser that is part of the protease active site of the proenzyme becomes the pyruvoyl prosthetic group, which constitutes an essential element of the active site of the mature decarboxylase.</text>
</comment>
<comment type="disruption phenotype">
    <text evidence="3">Disruption mutant contains no phosphatidylethanolamine and accumulates phosphatidylserine, but it grows well without supplementation of divalent cations.</text>
</comment>
<comment type="similarity">
    <text evidence="1">Belongs to the phosphatidylserine decarboxylase family. PSD-B subfamily. Prokaryotic type I sub-subfamily.</text>
</comment>
<gene>
    <name evidence="1 4" type="primary">psd</name>
    <name type="ordered locus">BSU02290</name>
</gene>
<keyword id="KW-1003">Cell membrane</keyword>
<keyword id="KW-0210">Decarboxylase</keyword>
<keyword id="KW-0444">Lipid biosynthesis</keyword>
<keyword id="KW-0443">Lipid metabolism</keyword>
<keyword id="KW-0456">Lyase</keyword>
<keyword id="KW-0472">Membrane</keyword>
<keyword id="KW-0594">Phospholipid biosynthesis</keyword>
<keyword id="KW-1208">Phospholipid metabolism</keyword>
<keyword id="KW-0670">Pyruvate</keyword>
<keyword id="KW-1185">Reference proteome</keyword>
<keyword id="KW-0865">Zymogen</keyword>